<sequence>MNQTLLSSFGTPFERVENALAALREGRGVMVLDDEDRENEGDMIFPAETMTVEQMALTIRHGSGIVCLCITEDRRKQLDLPMMVENNTSAYGTGFTVTIEAAEGVTTGVSAADRITTVRAAIADGAKPSDLNRPGHVFPLRAQAGGVLTRGGHTEATIDLMTLAGFKPAGVLCELTNDDGTMARAPECIEFANKHNMALVTIEDLVAYRQAHERKAS</sequence>
<organism>
    <name type="scientific">Escherichia coli (strain K12)</name>
    <dbReference type="NCBI Taxonomy" id="83333"/>
    <lineage>
        <taxon>Bacteria</taxon>
        <taxon>Pseudomonadati</taxon>
        <taxon>Pseudomonadota</taxon>
        <taxon>Gammaproteobacteria</taxon>
        <taxon>Enterobacterales</taxon>
        <taxon>Enterobacteriaceae</taxon>
        <taxon>Escherichia</taxon>
    </lineage>
</organism>
<protein>
    <recommendedName>
        <fullName evidence="5 6">3,4-dihydroxy-2-butanone 4-phosphate synthase</fullName>
        <shortName>DHBP synthase</shortName>
        <shortName evidence="5">DHBPS</shortName>
        <ecNumber evidence="4">4.1.99.12</ecNumber>
    </recommendedName>
</protein>
<evidence type="ECO:0000255" key="1">
    <source>
        <dbReference type="HAMAP-Rule" id="MF_00180"/>
    </source>
</evidence>
<evidence type="ECO:0000269" key="2">
    <source>
    </source>
</evidence>
<evidence type="ECO:0000269" key="3">
    <source>
    </source>
</evidence>
<evidence type="ECO:0000269" key="4">
    <source>
    </source>
</evidence>
<evidence type="ECO:0000303" key="5">
    <source>
    </source>
</evidence>
<evidence type="ECO:0000303" key="6">
    <source>
    </source>
</evidence>
<evidence type="ECO:0000305" key="7"/>
<evidence type="ECO:0000305" key="8">
    <source>
    </source>
</evidence>
<evidence type="ECO:0007829" key="9">
    <source>
        <dbReference type="PDB" id="1G57"/>
    </source>
</evidence>
<evidence type="ECO:0007829" key="10">
    <source>
        <dbReference type="PDB" id="1IEZ"/>
    </source>
</evidence>
<evidence type="ECO:0007829" key="11">
    <source>
        <dbReference type="PDB" id="7TYE"/>
    </source>
</evidence>
<reference key="1">
    <citation type="journal article" date="1991" name="J. Bacteriol.">
        <title>The Escherichia coli htrP gene product is essential for bacterial growth at high temperatures: mapping, cloning, sequencing, and transcriptional regulation of htrP.</title>
        <authorList>
            <person name="Raina S."/>
            <person name="Mabey L."/>
            <person name="Georgopoulos C."/>
        </authorList>
    </citation>
    <scope>NUCLEOTIDE SEQUENCE [GENOMIC DNA]</scope>
</reference>
<reference key="2">
    <citation type="journal article" date="1992" name="Biochim. Biophys. Acta">
        <title>Nucleotide sequence of a region duplicated in Escherichia coli toc mutants.</title>
        <authorList>
            <person name="Yang T.-P."/>
            <person name="Depew R.E."/>
        </authorList>
    </citation>
    <scope>NUCLEOTIDE SEQUENCE [GENOMIC DNA]</scope>
</reference>
<reference key="3">
    <citation type="journal article" date="1992" name="J. Bacteriol.">
        <title>Biosynthesis of riboflavin: cloning, sequencing, and expression of the gene coding for 3,4-dihydroxy-2-butanone 4-phosphate synthase of Escherichia coli.</title>
        <authorList>
            <person name="Richter G."/>
            <person name="Volk R."/>
            <person name="Krieger C."/>
            <person name="Laham H.-W."/>
            <person name="Roethlisberger U."/>
            <person name="Bacher A."/>
        </authorList>
    </citation>
    <scope>NUCLEOTIDE SEQUENCE [GENOMIC DNA]</scope>
    <scope>PROTEIN SEQUENCE OF 1-39</scope>
    <scope>MASS SPECTROMETRY</scope>
    <scope>CATALYTIC ACTIVITY</scope>
    <scope>FUNCTION</scope>
    <source>
        <strain>K12</strain>
    </source>
</reference>
<reference key="4">
    <citation type="journal article" date="1997" name="Science">
        <title>The complete genome sequence of Escherichia coli K-12.</title>
        <authorList>
            <person name="Blattner F.R."/>
            <person name="Plunkett G. III"/>
            <person name="Bloch C.A."/>
            <person name="Perna N.T."/>
            <person name="Burland V."/>
            <person name="Riley M."/>
            <person name="Collado-Vides J."/>
            <person name="Glasner J.D."/>
            <person name="Rode C.K."/>
            <person name="Mayhew G.F."/>
            <person name="Gregor J."/>
            <person name="Davis N.W."/>
            <person name="Kirkpatrick H.A."/>
            <person name="Goeden M.A."/>
            <person name="Rose D.J."/>
            <person name="Mau B."/>
            <person name="Shao Y."/>
        </authorList>
    </citation>
    <scope>NUCLEOTIDE SEQUENCE [LARGE SCALE GENOMIC DNA]</scope>
    <source>
        <strain>K12 / MG1655 / ATCC 47076</strain>
    </source>
</reference>
<reference key="5">
    <citation type="journal article" date="2006" name="Mol. Syst. Biol.">
        <title>Highly accurate genome sequences of Escherichia coli K-12 strains MG1655 and W3110.</title>
        <authorList>
            <person name="Hayashi K."/>
            <person name="Morooka N."/>
            <person name="Yamamoto Y."/>
            <person name="Fujita K."/>
            <person name="Isono K."/>
            <person name="Choi S."/>
            <person name="Ohtsubo E."/>
            <person name="Baba T."/>
            <person name="Wanner B.L."/>
            <person name="Mori H."/>
            <person name="Horiuchi T."/>
        </authorList>
    </citation>
    <scope>NUCLEOTIDE SEQUENCE [LARGE SCALE GENOMIC DNA]</scope>
    <source>
        <strain>K12 / W3110 / ATCC 27325 / DSM 5911</strain>
    </source>
</reference>
<reference key="6">
    <citation type="journal article" date="2001" name="Proc. Natl. Acad. Sci. U.S.A.">
        <title>The NMR structure of the 47-kDa dimeric enzyme 3,4-dihydroxy-2-butanone-4-phosphate synthase and ligand binding studies reveal the location of the active site.</title>
        <authorList>
            <person name="Kelly M.J.S."/>
            <person name="Ball L.J."/>
            <person name="Krieger C."/>
            <person name="Yu Y."/>
            <person name="Fischer M."/>
            <person name="Schiffmann S."/>
            <person name="Schmieder P."/>
            <person name="Kuehne R."/>
            <person name="Bermel W."/>
            <person name="Bacher A."/>
            <person name="Richter G."/>
            <person name="Oschkinat H."/>
        </authorList>
    </citation>
    <scope>STRUCTURE BY NMR</scope>
    <scope>COFACTOR</scope>
    <scope>MUTAGENESIS OF ASP-33; GLU-35; ARG-37; GLU-38; GLU-40; ASP-42; CYS-67; THR-107; SER-110; ASP-113; THR-117; HIS-136; ARG-150; HIS-153; GLU-155 AND GLU-174</scope>
    <scope>SUBUNIT</scope>
</reference>
<reference key="7">
    <citation type="journal article" date="2001" name="Structure">
        <title>Crystal structure of 3,4-dihydroxy-2-butanone 4-phosphate synthase of riboflavin biosynthesis.</title>
        <authorList>
            <person name="Liao D.-I."/>
            <person name="Calabrese J.C."/>
            <person name="Wawrzak Z."/>
            <person name="Viitanen P.V."/>
            <person name="Jordan D.B."/>
        </authorList>
    </citation>
    <scope>X-RAY CRYSTALLOGRAPHY (1.40 ANGSTROMS)</scope>
    <scope>SUBUNIT</scope>
</reference>
<comment type="function">
    <text evidence="4">Catalyzes the conversion of D-ribulose 5-phosphate to formate and 3,4-dihydroxy-2-butanone 4-phosphate.</text>
</comment>
<comment type="catalytic activity">
    <reaction evidence="4">
        <text>D-ribulose 5-phosphate = (2S)-2-hydroxy-3-oxobutyl phosphate + formate + H(+)</text>
        <dbReference type="Rhea" id="RHEA:18457"/>
        <dbReference type="ChEBI" id="CHEBI:15378"/>
        <dbReference type="ChEBI" id="CHEBI:15740"/>
        <dbReference type="ChEBI" id="CHEBI:58121"/>
        <dbReference type="ChEBI" id="CHEBI:58830"/>
        <dbReference type="EC" id="4.1.99.12"/>
    </reaction>
    <physiologicalReaction direction="left-to-right" evidence="8">
        <dbReference type="Rhea" id="RHEA:18458"/>
    </physiologicalReaction>
</comment>
<comment type="cofactor">
    <cofactor evidence="3">
        <name>Mg(2+)</name>
        <dbReference type="ChEBI" id="CHEBI:18420"/>
    </cofactor>
    <cofactor evidence="1">
        <name>Mn(2+)</name>
        <dbReference type="ChEBI" id="CHEBI:29035"/>
    </cofactor>
    <text evidence="3">Binds 2 divalent metal cations per subunit. Magnesium or manganese.</text>
</comment>
<comment type="pathway">
    <text>Cofactor biosynthesis; riboflavin biosynthesis; 2-hydroxy-3-oxobutyl phosphate from D-ribulose 5-phosphate: step 1/1.</text>
</comment>
<comment type="subunit">
    <text evidence="2 3">Homodimer.</text>
</comment>
<comment type="interaction">
    <interactant intactId="EBI-553653">
        <id>P0A7J0</id>
    </interactant>
    <interactant intactId="EBI-553653">
        <id>P0A7J0</id>
        <label>ribB</label>
    </interactant>
    <organismsDiffer>false</organismsDiffer>
    <experiments>4</experiments>
</comment>
<comment type="subcellular location">
    <subcellularLocation>
        <location evidence="7">Cell membrane</location>
        <topology evidence="7">Peripheral membrane protein</topology>
    </subcellularLocation>
</comment>
<comment type="induction">
    <text>Is expressed at all temperatures, but accumulation of transcripts decline with raising temperature. Thus, its expression is repressed by heat shock.</text>
</comment>
<comment type="mass spectrometry"/>
<comment type="similarity">
    <text evidence="7">Belongs to the DHBP synthase family.</text>
</comment>
<gene>
    <name type="primary">ribB</name>
    <name type="synonym">htrP</name>
    <name type="ordered locus">b3041</name>
    <name type="ordered locus">JW3009</name>
</gene>
<accession>P0A7J0</accession>
<accession>P24199</accession>
<accession>Q2M9F9</accession>
<proteinExistence type="evidence at protein level"/>
<feature type="chain" id="PRO_0000151797" description="3,4-dihydroxy-2-butanone 4-phosphate synthase">
    <location>
        <begin position="1"/>
        <end position="217"/>
    </location>
</feature>
<feature type="binding site" evidence="1">
    <location>
        <begin position="37"/>
        <end position="38"/>
    </location>
    <ligand>
        <name>D-ribulose 5-phosphate</name>
        <dbReference type="ChEBI" id="CHEBI:58121"/>
    </ligand>
</feature>
<feature type="binding site" evidence="1">
    <location>
        <position position="38"/>
    </location>
    <ligand>
        <name>Mg(2+)</name>
        <dbReference type="ChEBI" id="CHEBI:18420"/>
        <label>1</label>
    </ligand>
</feature>
<feature type="binding site" evidence="1">
    <location>
        <position position="38"/>
    </location>
    <ligand>
        <name>Mg(2+)</name>
        <dbReference type="ChEBI" id="CHEBI:18420"/>
        <label>2</label>
    </ligand>
</feature>
<feature type="binding site" evidence="1">
    <location>
        <position position="42"/>
    </location>
    <ligand>
        <name>D-ribulose 5-phosphate</name>
        <dbReference type="ChEBI" id="CHEBI:58121"/>
    </ligand>
</feature>
<feature type="binding site" evidence="1">
    <location>
        <begin position="150"/>
        <end position="154"/>
    </location>
    <ligand>
        <name>D-ribulose 5-phosphate</name>
        <dbReference type="ChEBI" id="CHEBI:58121"/>
    </ligand>
</feature>
<feature type="binding site" evidence="1">
    <location>
        <position position="153"/>
    </location>
    <ligand>
        <name>Mg(2+)</name>
        <dbReference type="ChEBI" id="CHEBI:18420"/>
        <label>2</label>
    </ligand>
</feature>
<feature type="site" description="Essential for catalytic activity">
    <location>
        <position position="136"/>
    </location>
</feature>
<feature type="site" description="Essential for catalytic activity">
    <location>
        <position position="174"/>
    </location>
</feature>
<feature type="mutagenesis site" description="Loss of activity." evidence="3">
    <original>D</original>
    <variation>S</variation>
    <location>
        <position position="33"/>
    </location>
</feature>
<feature type="mutagenesis site" description="Reduces activity by 85%." evidence="3">
    <original>E</original>
    <variation>S</variation>
    <location>
        <position position="35"/>
    </location>
</feature>
<feature type="mutagenesis site" description="Loss of activity." evidence="3">
    <original>R</original>
    <variation>E</variation>
    <location>
        <position position="37"/>
    </location>
</feature>
<feature type="mutagenesis site" description="Loss of activity." evidence="3">
    <original>E</original>
    <variation>S</variation>
    <location>
        <position position="38"/>
    </location>
</feature>
<feature type="mutagenesis site" description="Loss of activity." evidence="3">
    <original>E</original>
    <variation>S</variation>
    <location>
        <position position="40"/>
    </location>
</feature>
<feature type="mutagenesis site" description="Loss of activity." evidence="3">
    <original>D</original>
    <variation>S</variation>
    <location>
        <position position="42"/>
    </location>
</feature>
<feature type="mutagenesis site" description="Reduces activity by 80%." evidence="3">
    <original>C</original>
    <variation>S</variation>
    <location>
        <position position="67"/>
    </location>
</feature>
<feature type="mutagenesis site" description="Loss of activity." evidence="3">
    <original>T</original>
    <variation>S</variation>
    <location>
        <position position="107"/>
    </location>
</feature>
<feature type="mutagenesis site" description="Reduces activity by 85%." evidence="3">
    <original>S</original>
    <variation>A</variation>
    <location>
        <position position="110"/>
    </location>
</feature>
<feature type="mutagenesis site" description="Reduces activity by 88%." evidence="3">
    <original>D</original>
    <variation>S</variation>
    <location>
        <position position="113"/>
    </location>
</feature>
<feature type="mutagenesis site" description="Reduces activity by 75%." evidence="3">
    <original>T</original>
    <variation>A</variation>
    <location>
        <position position="117"/>
    </location>
</feature>
<feature type="mutagenesis site" description="Loss of activity." evidence="3">
    <original>H</original>
    <variation>S</variation>
    <location>
        <position position="136"/>
    </location>
</feature>
<feature type="mutagenesis site" description="Loss of activity." evidence="3">
    <original>R</original>
    <variation>S</variation>
    <location>
        <position position="150"/>
    </location>
</feature>
<feature type="mutagenesis site" description="Loss of activity." evidence="3">
    <original>H</original>
    <variation>S</variation>
    <location>
        <position position="153"/>
    </location>
</feature>
<feature type="mutagenesis site" description="Reduces activity by 83%." evidence="3">
    <original>E</original>
    <variation>S</variation>
    <location>
        <position position="155"/>
    </location>
</feature>
<feature type="mutagenesis site" description="Loss of activity." evidence="3">
    <original>E</original>
    <variation>S</variation>
    <location>
        <position position="174"/>
    </location>
</feature>
<feature type="sequence conflict" description="In Ref. 1; AAA23996." evidence="7" ref="1">
    <original>AAIA</original>
    <variation>SDS</variation>
    <location>
        <begin position="120"/>
        <end position="123"/>
    </location>
</feature>
<feature type="sequence conflict" description="In Ref. 1; AAA23996." evidence="7" ref="1">
    <original>AHERKAS</original>
    <variation>HMSVKPAENRCLIYCLNQETEVVAGFGFYFSLLCKMLIPLLFL</variation>
    <location>
        <begin position="211"/>
        <end position="217"/>
    </location>
</feature>
<feature type="helix" evidence="9">
    <location>
        <begin position="6"/>
        <end position="9"/>
    </location>
</feature>
<feature type="helix" evidence="9">
    <location>
        <begin position="12"/>
        <end position="24"/>
    </location>
</feature>
<feature type="strand" evidence="9">
    <location>
        <begin position="29"/>
        <end position="33"/>
    </location>
</feature>
<feature type="strand" evidence="10">
    <location>
        <begin position="34"/>
        <end position="36"/>
    </location>
</feature>
<feature type="strand" evidence="9">
    <location>
        <begin position="40"/>
        <end position="46"/>
    </location>
</feature>
<feature type="turn" evidence="9">
    <location>
        <begin position="47"/>
        <end position="49"/>
    </location>
</feature>
<feature type="helix" evidence="9">
    <location>
        <begin position="52"/>
        <end position="61"/>
    </location>
</feature>
<feature type="strand" evidence="9">
    <location>
        <begin position="67"/>
        <end position="70"/>
    </location>
</feature>
<feature type="helix" evidence="9">
    <location>
        <begin position="72"/>
        <end position="77"/>
    </location>
</feature>
<feature type="strand" evidence="11">
    <location>
        <begin position="89"/>
        <end position="91"/>
    </location>
</feature>
<feature type="strand" evidence="9">
    <location>
        <begin position="95"/>
        <end position="97"/>
    </location>
</feature>
<feature type="strand" evidence="9">
    <location>
        <begin position="99"/>
        <end position="104"/>
    </location>
</feature>
<feature type="strand" evidence="9">
    <location>
        <begin position="106"/>
        <end position="108"/>
    </location>
</feature>
<feature type="helix" evidence="9">
    <location>
        <begin position="111"/>
        <end position="122"/>
    </location>
</feature>
<feature type="helix" evidence="9">
    <location>
        <begin position="128"/>
        <end position="130"/>
    </location>
</feature>
<feature type="strand" evidence="9">
    <location>
        <begin position="131"/>
        <end position="141"/>
    </location>
</feature>
<feature type="helix" evidence="9">
    <location>
        <begin position="146"/>
        <end position="148"/>
    </location>
</feature>
<feature type="helix" evidence="9">
    <location>
        <begin position="153"/>
        <end position="163"/>
    </location>
</feature>
<feature type="strand" evidence="9">
    <location>
        <begin position="170"/>
        <end position="176"/>
    </location>
</feature>
<feature type="strand" evidence="9">
    <location>
        <begin position="180"/>
        <end position="182"/>
    </location>
</feature>
<feature type="helix" evidence="9">
    <location>
        <begin position="185"/>
        <end position="194"/>
    </location>
</feature>
<feature type="strand" evidence="9">
    <location>
        <begin position="198"/>
        <end position="201"/>
    </location>
</feature>
<feature type="helix" evidence="9">
    <location>
        <begin position="202"/>
        <end position="212"/>
    </location>
</feature>
<name>RIBB_ECOLI</name>
<keyword id="KW-0002">3D-structure</keyword>
<keyword id="KW-1003">Cell membrane</keyword>
<keyword id="KW-0903">Direct protein sequencing</keyword>
<keyword id="KW-0456">Lyase</keyword>
<keyword id="KW-0460">Magnesium</keyword>
<keyword id="KW-0464">Manganese</keyword>
<keyword id="KW-0472">Membrane</keyword>
<keyword id="KW-0479">Metal-binding</keyword>
<keyword id="KW-1185">Reference proteome</keyword>
<keyword id="KW-0686">Riboflavin biosynthesis</keyword>
<keyword id="KW-0346">Stress response</keyword>
<dbReference type="EC" id="4.1.99.12" evidence="4"/>
<dbReference type="EMBL" id="M64472">
    <property type="protein sequence ID" value="AAA23996.1"/>
    <property type="molecule type" value="Genomic_DNA"/>
</dbReference>
<dbReference type="EMBL" id="M77129">
    <property type="protein sequence ID" value="AAA71879.1"/>
    <property type="molecule type" value="Genomic_DNA"/>
</dbReference>
<dbReference type="EMBL" id="X66720">
    <property type="protein sequence ID" value="CAA47252.1"/>
    <property type="molecule type" value="Genomic_DNA"/>
</dbReference>
<dbReference type="EMBL" id="U28377">
    <property type="protein sequence ID" value="AAA69209.1"/>
    <property type="molecule type" value="Genomic_DNA"/>
</dbReference>
<dbReference type="EMBL" id="U00096">
    <property type="protein sequence ID" value="AAC76077.1"/>
    <property type="molecule type" value="Genomic_DNA"/>
</dbReference>
<dbReference type="EMBL" id="AP009048">
    <property type="protein sequence ID" value="BAE77097.1"/>
    <property type="molecule type" value="Genomic_DNA"/>
</dbReference>
<dbReference type="PIR" id="A38159">
    <property type="entry name" value="A38159"/>
</dbReference>
<dbReference type="RefSeq" id="NP_417513.1">
    <property type="nucleotide sequence ID" value="NC_000913.3"/>
</dbReference>
<dbReference type="RefSeq" id="WP_001076997.1">
    <property type="nucleotide sequence ID" value="NZ_STEB01000001.1"/>
</dbReference>
<dbReference type="PDB" id="1G57">
    <property type="method" value="X-ray"/>
    <property type="resolution" value="1.40 A"/>
    <property type="chains" value="A/B=3-217"/>
</dbReference>
<dbReference type="PDB" id="1G58">
    <property type="method" value="X-ray"/>
    <property type="resolution" value="1.55 A"/>
    <property type="chains" value="A/B=3-217"/>
</dbReference>
<dbReference type="PDB" id="1IEZ">
    <property type="method" value="NMR"/>
    <property type="chains" value="A=1-217"/>
</dbReference>
<dbReference type="PDB" id="7TYE">
    <property type="method" value="X-ray"/>
    <property type="resolution" value="1.94 A"/>
    <property type="chains" value="A/B/C=1-217"/>
</dbReference>
<dbReference type="PDBsum" id="1G57"/>
<dbReference type="PDBsum" id="1G58"/>
<dbReference type="PDBsum" id="1IEZ"/>
<dbReference type="PDBsum" id="7TYE"/>
<dbReference type="SMR" id="P0A7J0"/>
<dbReference type="BioGRID" id="4260672">
    <property type="interactions" value="76"/>
</dbReference>
<dbReference type="BioGRID" id="851843">
    <property type="interactions" value="1"/>
</dbReference>
<dbReference type="DIP" id="DIP-35934N"/>
<dbReference type="FunCoup" id="P0A7J0">
    <property type="interactions" value="592"/>
</dbReference>
<dbReference type="IntAct" id="P0A7J0">
    <property type="interactions" value="26"/>
</dbReference>
<dbReference type="STRING" id="511145.b3041"/>
<dbReference type="jPOST" id="P0A7J0"/>
<dbReference type="PaxDb" id="511145-b3041"/>
<dbReference type="EnsemblBacteria" id="AAC76077">
    <property type="protein sequence ID" value="AAC76077"/>
    <property type="gene ID" value="b3041"/>
</dbReference>
<dbReference type="GeneID" id="93778953"/>
<dbReference type="GeneID" id="947526"/>
<dbReference type="KEGG" id="ecj:JW3009"/>
<dbReference type="KEGG" id="eco:b3041"/>
<dbReference type="KEGG" id="ecoc:C3026_16610"/>
<dbReference type="PATRIC" id="fig|1411691.4.peg.3690"/>
<dbReference type="EchoBASE" id="EB0460"/>
<dbReference type="eggNOG" id="COG0108">
    <property type="taxonomic scope" value="Bacteria"/>
</dbReference>
<dbReference type="HOGENOM" id="CLU_020273_3_0_6"/>
<dbReference type="InParanoid" id="P0A7J0"/>
<dbReference type="OMA" id="DAGGLIC"/>
<dbReference type="OrthoDB" id="9793111at2"/>
<dbReference type="PhylomeDB" id="P0A7J0"/>
<dbReference type="BioCyc" id="EcoCyc:DIOHBUTANONEPSYN-MONOMER"/>
<dbReference type="BioCyc" id="MetaCyc:DIOHBUTANONEPSYN-MONOMER"/>
<dbReference type="BRENDA" id="4.1.99.12">
    <property type="organism ID" value="2026"/>
</dbReference>
<dbReference type="UniPathway" id="UPA00275">
    <property type="reaction ID" value="UER00399"/>
</dbReference>
<dbReference type="EvolutionaryTrace" id="P0A7J0"/>
<dbReference type="PRO" id="PR:P0A7J0"/>
<dbReference type="Proteomes" id="UP000000625">
    <property type="component" value="Chromosome"/>
</dbReference>
<dbReference type="GO" id="GO:0005829">
    <property type="term" value="C:cytosol"/>
    <property type="evidence" value="ECO:0000314"/>
    <property type="project" value="EcoCyc"/>
</dbReference>
<dbReference type="GO" id="GO:0005886">
    <property type="term" value="C:plasma membrane"/>
    <property type="evidence" value="ECO:0007669"/>
    <property type="project" value="UniProtKB-SubCell"/>
</dbReference>
<dbReference type="GO" id="GO:0008686">
    <property type="term" value="F:3,4-dihydroxy-2-butanone-4-phosphate synthase activity"/>
    <property type="evidence" value="ECO:0000314"/>
    <property type="project" value="EcoCyc"/>
</dbReference>
<dbReference type="GO" id="GO:0042802">
    <property type="term" value="F:identical protein binding"/>
    <property type="evidence" value="ECO:0000353"/>
    <property type="project" value="IntAct"/>
</dbReference>
<dbReference type="GO" id="GO:0000287">
    <property type="term" value="F:magnesium ion binding"/>
    <property type="evidence" value="ECO:0000314"/>
    <property type="project" value="EcoCyc"/>
</dbReference>
<dbReference type="GO" id="GO:0030145">
    <property type="term" value="F:manganese ion binding"/>
    <property type="evidence" value="ECO:0007669"/>
    <property type="project" value="UniProtKB-UniRule"/>
</dbReference>
<dbReference type="GO" id="GO:0042803">
    <property type="term" value="F:protein homodimerization activity"/>
    <property type="evidence" value="ECO:0000314"/>
    <property type="project" value="EcoCyc"/>
</dbReference>
<dbReference type="GO" id="GO:0009231">
    <property type="term" value="P:riboflavin biosynthetic process"/>
    <property type="evidence" value="ECO:0000315"/>
    <property type="project" value="EcoCyc"/>
</dbReference>
<dbReference type="FunFam" id="3.90.870.10:FF:000002">
    <property type="entry name" value="3,4-dihydroxy-2-butanone 4-phosphate synthase"/>
    <property type="match status" value="1"/>
</dbReference>
<dbReference type="Gene3D" id="3.90.870.10">
    <property type="entry name" value="DHBP synthase"/>
    <property type="match status" value="1"/>
</dbReference>
<dbReference type="HAMAP" id="MF_00180">
    <property type="entry name" value="RibB"/>
    <property type="match status" value="1"/>
</dbReference>
<dbReference type="InterPro" id="IPR017945">
    <property type="entry name" value="DHBP_synth_RibB-like_a/b_dom"/>
</dbReference>
<dbReference type="InterPro" id="IPR000422">
    <property type="entry name" value="DHBP_synthase_RibB"/>
</dbReference>
<dbReference type="NCBIfam" id="TIGR00506">
    <property type="entry name" value="ribB"/>
    <property type="match status" value="1"/>
</dbReference>
<dbReference type="PANTHER" id="PTHR21327:SF38">
    <property type="entry name" value="3,4-DIHYDROXY-2-BUTANONE 4-PHOSPHATE SYNTHASE"/>
    <property type="match status" value="1"/>
</dbReference>
<dbReference type="PANTHER" id="PTHR21327">
    <property type="entry name" value="GTP CYCLOHYDROLASE II-RELATED"/>
    <property type="match status" value="1"/>
</dbReference>
<dbReference type="Pfam" id="PF00926">
    <property type="entry name" value="DHBP_synthase"/>
    <property type="match status" value="1"/>
</dbReference>
<dbReference type="SUPFAM" id="SSF55821">
    <property type="entry name" value="YrdC/RibB"/>
    <property type="match status" value="1"/>
</dbReference>